<comment type="catalytic activity">
    <reaction evidence="2">
        <text>D-glyceraldehyde 3-phosphate + phosphate + NAD(+) = (2R)-3-phospho-glyceroyl phosphate + NADH + H(+)</text>
        <dbReference type="Rhea" id="RHEA:10300"/>
        <dbReference type="ChEBI" id="CHEBI:15378"/>
        <dbReference type="ChEBI" id="CHEBI:43474"/>
        <dbReference type="ChEBI" id="CHEBI:57540"/>
        <dbReference type="ChEBI" id="CHEBI:57604"/>
        <dbReference type="ChEBI" id="CHEBI:57945"/>
        <dbReference type="ChEBI" id="CHEBI:59776"/>
        <dbReference type="EC" id="1.2.1.12"/>
    </reaction>
</comment>
<comment type="activity regulation">
    <text>Inhibited by koningic acid through the interaction of cysteine residues with koningic acid even at very low concentrations.</text>
</comment>
<comment type="pathway">
    <text>Carbohydrate degradation; glycolysis; pyruvate from D-glyceraldehyde 3-phosphate: step 1/5.</text>
</comment>
<comment type="subunit">
    <text>Homotetramer.</text>
</comment>
<comment type="subcellular location">
    <subcellularLocation>
        <location>Cytoplasm</location>
    </subcellularLocation>
</comment>
<comment type="miscellaneous">
    <text>This protein is a koningic acid (antibiotic)-sensitive GAPDH isozyme. It is present only when no antibiotic is produced.</text>
</comment>
<comment type="similarity">
    <text evidence="4">Belongs to the glyceraldehyde-3-phosphate dehydrogenase family.</text>
</comment>
<keyword id="KW-0963">Cytoplasm</keyword>
<keyword id="KW-0903">Direct protein sequencing</keyword>
<keyword id="KW-0324">Glycolysis</keyword>
<keyword id="KW-0520">NAD</keyword>
<keyword id="KW-0560">Oxidoreductase</keyword>
<protein>
    <recommendedName>
        <fullName>Glyceraldehyde-3-phosphate dehydrogenase 2</fullName>
        <shortName>GAPDH2</shortName>
        <ecNumber>1.2.1.12</ecNumber>
    </recommendedName>
</protein>
<gene>
    <name type="primary">gpd2</name>
</gene>
<name>G3P2_TRIKO</name>
<organism>
    <name type="scientific">Trichoderma koningii</name>
    <name type="common">Hypocrea koningii</name>
    <dbReference type="NCBI Taxonomy" id="97093"/>
    <lineage>
        <taxon>Eukaryota</taxon>
        <taxon>Fungi</taxon>
        <taxon>Dikarya</taxon>
        <taxon>Ascomycota</taxon>
        <taxon>Pezizomycotina</taxon>
        <taxon>Sordariomycetes</taxon>
        <taxon>Hypocreomycetidae</taxon>
        <taxon>Hypocreales</taxon>
        <taxon>Hypocreaceae</taxon>
        <taxon>Trichoderma</taxon>
    </lineage>
</organism>
<accession>P17730</accession>
<dbReference type="EC" id="1.2.1.12"/>
<dbReference type="EMBL" id="D14518">
    <property type="protein sequence ID" value="BAA03391.1"/>
    <property type="molecule type" value="mRNA"/>
</dbReference>
<dbReference type="SMR" id="P17730"/>
<dbReference type="SABIO-RK" id="P17730"/>
<dbReference type="UniPathway" id="UPA00109">
    <property type="reaction ID" value="UER00184"/>
</dbReference>
<dbReference type="GO" id="GO:0005829">
    <property type="term" value="C:cytosol"/>
    <property type="evidence" value="ECO:0007669"/>
    <property type="project" value="TreeGrafter"/>
</dbReference>
<dbReference type="GO" id="GO:0004365">
    <property type="term" value="F:glyceraldehyde-3-phosphate dehydrogenase (NAD+) (phosphorylating) activity"/>
    <property type="evidence" value="ECO:0007669"/>
    <property type="project" value="UniProtKB-EC"/>
</dbReference>
<dbReference type="GO" id="GO:0051287">
    <property type="term" value="F:NAD binding"/>
    <property type="evidence" value="ECO:0007669"/>
    <property type="project" value="InterPro"/>
</dbReference>
<dbReference type="GO" id="GO:0050661">
    <property type="term" value="F:NADP binding"/>
    <property type="evidence" value="ECO:0007669"/>
    <property type="project" value="InterPro"/>
</dbReference>
<dbReference type="GO" id="GO:0006006">
    <property type="term" value="P:glucose metabolic process"/>
    <property type="evidence" value="ECO:0007669"/>
    <property type="project" value="InterPro"/>
</dbReference>
<dbReference type="GO" id="GO:0006096">
    <property type="term" value="P:glycolytic process"/>
    <property type="evidence" value="ECO:0007669"/>
    <property type="project" value="UniProtKB-UniPathway"/>
</dbReference>
<dbReference type="CDD" id="cd18126">
    <property type="entry name" value="GAPDH_I_C"/>
    <property type="match status" value="1"/>
</dbReference>
<dbReference type="CDD" id="cd05214">
    <property type="entry name" value="GAPDH_I_N"/>
    <property type="match status" value="1"/>
</dbReference>
<dbReference type="FunFam" id="3.30.360.10:FF:000001">
    <property type="entry name" value="Glyceraldehyde-3-phosphate dehydrogenase"/>
    <property type="match status" value="1"/>
</dbReference>
<dbReference type="FunFam" id="3.40.50.720:FF:000020">
    <property type="entry name" value="Glyceraldehyde-3-phosphate dehydrogenase"/>
    <property type="match status" value="1"/>
</dbReference>
<dbReference type="Gene3D" id="3.30.360.10">
    <property type="entry name" value="Dihydrodipicolinate Reductase, domain 2"/>
    <property type="match status" value="1"/>
</dbReference>
<dbReference type="Gene3D" id="3.40.50.720">
    <property type="entry name" value="NAD(P)-binding Rossmann-like Domain"/>
    <property type="match status" value="1"/>
</dbReference>
<dbReference type="InterPro" id="IPR020831">
    <property type="entry name" value="GlycerAld/Erythrose_P_DH"/>
</dbReference>
<dbReference type="InterPro" id="IPR020830">
    <property type="entry name" value="GlycerAld_3-P_DH_AS"/>
</dbReference>
<dbReference type="InterPro" id="IPR020829">
    <property type="entry name" value="GlycerAld_3-P_DH_cat"/>
</dbReference>
<dbReference type="InterPro" id="IPR020828">
    <property type="entry name" value="GlycerAld_3-P_DH_NAD(P)-bd"/>
</dbReference>
<dbReference type="InterPro" id="IPR006424">
    <property type="entry name" value="Glyceraldehyde-3-P_DH_1"/>
</dbReference>
<dbReference type="InterPro" id="IPR036291">
    <property type="entry name" value="NAD(P)-bd_dom_sf"/>
</dbReference>
<dbReference type="NCBIfam" id="TIGR01534">
    <property type="entry name" value="GAPDH-I"/>
    <property type="match status" value="1"/>
</dbReference>
<dbReference type="PANTHER" id="PTHR10836">
    <property type="entry name" value="GLYCERALDEHYDE 3-PHOSPHATE DEHYDROGENASE"/>
    <property type="match status" value="1"/>
</dbReference>
<dbReference type="PANTHER" id="PTHR10836:SF76">
    <property type="entry name" value="GLYCERALDEHYDE-3-PHOSPHATE DEHYDROGENASE-RELATED"/>
    <property type="match status" value="1"/>
</dbReference>
<dbReference type="Pfam" id="PF02800">
    <property type="entry name" value="Gp_dh_C"/>
    <property type="match status" value="1"/>
</dbReference>
<dbReference type="Pfam" id="PF00044">
    <property type="entry name" value="Gp_dh_N"/>
    <property type="match status" value="1"/>
</dbReference>
<dbReference type="PIRSF" id="PIRSF000149">
    <property type="entry name" value="GAP_DH"/>
    <property type="match status" value="1"/>
</dbReference>
<dbReference type="PRINTS" id="PR00078">
    <property type="entry name" value="G3PDHDRGNASE"/>
</dbReference>
<dbReference type="SMART" id="SM00846">
    <property type="entry name" value="Gp_dh_N"/>
    <property type="match status" value="1"/>
</dbReference>
<dbReference type="SUPFAM" id="SSF55347">
    <property type="entry name" value="Glyceraldehyde-3-phosphate dehydrogenase-like, C-terminal domain"/>
    <property type="match status" value="1"/>
</dbReference>
<dbReference type="SUPFAM" id="SSF51735">
    <property type="entry name" value="NAD(P)-binding Rossmann-fold domains"/>
    <property type="match status" value="1"/>
</dbReference>
<dbReference type="PROSITE" id="PS00071">
    <property type="entry name" value="GAPDH"/>
    <property type="match status" value="1"/>
</dbReference>
<reference key="1">
    <citation type="journal article" date="1993" name="Biochim. Biophys. Acta">
        <title>Cloning of two isozymes of Trichoderma koningii glyceraldehyde-3-phosphate dehydrogenase with different sensitivity to koningic acid.</title>
        <authorList>
            <person name="Watanabe H."/>
            <person name="Hasumi K."/>
            <person name="Fukushima Y."/>
            <person name="Sakai K."/>
            <person name="Endo A."/>
        </authorList>
    </citation>
    <scope>NUCLEOTIDE SEQUENCE [MRNA]</scope>
    <source>
        <strain>M3947</strain>
    </source>
</reference>
<reference key="2">
    <citation type="journal article" date="1990" name="Eur. J. Biochem.">
        <title>Two glyceraldehyde-3-phosphate dehydrogenase isozymes from the koningic acid (heptelidic acid) producer Trichoderma koningii.</title>
        <authorList>
            <person name="Sakai K."/>
            <person name="Hasumi K."/>
            <person name="Endo A."/>
        </authorList>
    </citation>
    <scope>PROTEIN SEQUENCE OF 2-32</scope>
    <source>
        <strain>M3947</strain>
    </source>
</reference>
<proteinExistence type="evidence at protein level"/>
<sequence length="338" mass="36106">MAPIKVGINGFGRIGRIVFRNAVEHPDIEVVAVNDPFIETTYAAYMLKYDSSHGLFKGEVEVDGKDLVVNGKKVRFYTERNPADIKWSETGAEYVVESTGVFTTTEKAKAHLVGGAKKVIISAPSADAPMYVMGVNESDYDGSADVISNASCTTNCLAPLAKVINDNYGIVEGLMTTVHSYTATQKTVDGPSAKDWRGGRGAAQNIIPSSTGAAKAVGKVIPALNGKLTGMSIRVPTANVSVVDLTVRIEKGASYEEITETIKKAADGPLKGVLAYTGDDVVSSDMLGNTNSSIFDIKAGISLNKNFVKLVSWYDNEWGYSRRVLDLLAHVAKVDASK</sequence>
<feature type="initiator methionine" description="Removed" evidence="3">
    <location>
        <position position="1"/>
    </location>
</feature>
<feature type="chain" id="PRO_0000145586" description="Glyceraldehyde-3-phosphate dehydrogenase 2">
    <location>
        <begin position="2"/>
        <end position="338"/>
    </location>
</feature>
<feature type="active site" description="Nucleophile" evidence="2">
    <location>
        <position position="152"/>
    </location>
</feature>
<feature type="binding site" evidence="1">
    <location>
        <begin position="13"/>
        <end position="14"/>
    </location>
    <ligand>
        <name>NAD(+)</name>
        <dbReference type="ChEBI" id="CHEBI:57540"/>
    </ligand>
</feature>
<feature type="binding site" evidence="1">
    <location>
        <position position="35"/>
    </location>
    <ligand>
        <name>NAD(+)</name>
        <dbReference type="ChEBI" id="CHEBI:57540"/>
    </ligand>
</feature>
<feature type="binding site" evidence="1">
    <location>
        <position position="80"/>
    </location>
    <ligand>
        <name>NAD(+)</name>
        <dbReference type="ChEBI" id="CHEBI:57540"/>
    </ligand>
</feature>
<feature type="binding site" evidence="1">
    <location>
        <begin position="151"/>
        <end position="153"/>
    </location>
    <ligand>
        <name>D-glyceraldehyde 3-phosphate</name>
        <dbReference type="ChEBI" id="CHEBI:59776"/>
    </ligand>
</feature>
<feature type="binding site" evidence="1">
    <location>
        <position position="182"/>
    </location>
    <ligand>
        <name>D-glyceraldehyde 3-phosphate</name>
        <dbReference type="ChEBI" id="CHEBI:59776"/>
    </ligand>
</feature>
<feature type="binding site" evidence="1">
    <location>
        <begin position="211"/>
        <end position="212"/>
    </location>
    <ligand>
        <name>D-glyceraldehyde 3-phosphate</name>
        <dbReference type="ChEBI" id="CHEBI:59776"/>
    </ligand>
</feature>
<feature type="binding site" evidence="1">
    <location>
        <position position="234"/>
    </location>
    <ligand>
        <name>D-glyceraldehyde 3-phosphate</name>
        <dbReference type="ChEBI" id="CHEBI:59776"/>
    </ligand>
</feature>
<feature type="binding site" evidence="1">
    <location>
        <position position="316"/>
    </location>
    <ligand>
        <name>NAD(+)</name>
        <dbReference type="ChEBI" id="CHEBI:57540"/>
    </ligand>
</feature>
<feature type="site" description="Activates thiol group during catalysis" evidence="1">
    <location>
        <position position="179"/>
    </location>
</feature>
<feature type="sequence conflict" description="In Ref. 2; AA sequence." evidence="4" ref="2">
    <original>H</original>
    <variation>K</variation>
    <location>
        <position position="25"/>
    </location>
</feature>
<feature type="sequence conflict" description="In Ref. 2; AA sequence." evidence="4" ref="2">
    <original>D</original>
    <variation>N</variation>
    <location>
        <position position="27"/>
    </location>
</feature>
<evidence type="ECO:0000250" key="1"/>
<evidence type="ECO:0000255" key="2">
    <source>
        <dbReference type="PROSITE-ProRule" id="PRU10009"/>
    </source>
</evidence>
<evidence type="ECO:0000269" key="3">
    <source>
    </source>
</evidence>
<evidence type="ECO:0000305" key="4"/>